<organism>
    <name type="scientific">Human papillomavirus 4</name>
    <dbReference type="NCBI Taxonomy" id="10617"/>
    <lineage>
        <taxon>Viruses</taxon>
        <taxon>Monodnaviria</taxon>
        <taxon>Shotokuvirae</taxon>
        <taxon>Cossaviricota</taxon>
        <taxon>Papovaviricetes</taxon>
        <taxon>Zurhausenvirales</taxon>
        <taxon>Papillomaviridae</taxon>
        <taxon>Firstpapillomavirinae</taxon>
        <taxon>Gammapapillomavirus</taxon>
        <taxon>Gammapapillomavirus 1</taxon>
    </lineage>
</organism>
<keyword id="KW-0010">Activator</keyword>
<keyword id="KW-0238">DNA-binding</keyword>
<keyword id="KW-0244">Early protein</keyword>
<keyword id="KW-1078">G1/S host cell cycle checkpoint dysregulation by virus</keyword>
<keyword id="KW-1035">Host cytoplasm</keyword>
<keyword id="KW-1048">Host nucleus</keyword>
<keyword id="KW-0945">Host-virus interaction</keyword>
<keyword id="KW-1090">Inhibition of host innate immune response by virus</keyword>
<keyword id="KW-1114">Inhibition of host interferon signaling pathway by virus</keyword>
<keyword id="KW-0922">Interferon antiviral system evasion</keyword>
<keyword id="KW-0479">Metal-binding</keyword>
<keyword id="KW-1121">Modulation of host cell cycle by virus</keyword>
<keyword id="KW-0553">Oncogene</keyword>
<keyword id="KW-1185">Reference proteome</keyword>
<keyword id="KW-0804">Transcription</keyword>
<keyword id="KW-0805">Transcription regulation</keyword>
<keyword id="KW-0899">Viral immunoevasion</keyword>
<keyword id="KW-0862">Zinc</keyword>
<keyword id="KW-0863">Zinc-finger</keyword>
<sequence>MRGAAPTVADLNLELNDLVLPANLLSEEVLQSSDDEYEITEEESVVPFRIDTCCYRCEVAVRITLYAAELGLRTLEQLLVEGKLTFCCTACARSLNRNGR</sequence>
<gene>
    <name evidence="1" type="primary">E7</name>
</gene>
<reference key="1">
    <citation type="journal article" date="1993" name="Virology">
        <title>Two novel types of human papillomavirus, HPV 63 and HPV 65: comparisons of their clinical and histological features and DNA sequences to other HPV types.</title>
        <authorList>
            <person name="Egawa K."/>
            <person name="Delius H."/>
            <person name="Matsukura T."/>
            <person name="Kawashima M."/>
            <person name="de Villiers E.M."/>
        </authorList>
    </citation>
    <scope>NUCLEOTIDE SEQUENCE [GENOMIC DNA]</scope>
</reference>
<reference key="2">
    <citation type="journal article" date="2002" name="Rev. Med. Virol.">
        <title>Interactions of SV40 large T antigen and other viral proteins with retinoblastoma tumour suppressor.</title>
        <authorList>
            <person name="Lee C."/>
            <person name="Cho Y."/>
        </authorList>
    </citation>
    <scope>REVIEW</scope>
</reference>
<accession>Q07857</accession>
<comment type="function">
    <text evidence="1">Plays a role in viral genome replication by driving entry of quiescent cells into the cell cycle. Stimulation of progression from G1 to S phase allows the virus to efficiently use the cellular DNA replicating machinery to achieve viral genome replication. E7 protein has both transforming and trans-activating activities. Induces the disassembly of the E2F1 transcription factor from RB1, with subsequent transcriptional activation of E2F1-regulated S-phase genes. Interferes with host histone deacetylation mediated by HDAC1 and HDAC2, leading to transcription activation. Also plays a role in the inhibition of both antiviral and antiproliferative functions of host interferon alpha. Interaction with host TMEM173/STING impairs the ability of TMEM173/STING to sense cytosolic DNA and promote the production of type I interferon (IFN-alpha and IFN-beta).</text>
</comment>
<comment type="subunit">
    <text evidence="1">Homodimer. Homooligomer. Interacts with host RB1; this interaction induces dissociation of RB1-E2F1 complex thereby disrupting RB1 activity. Interacts with host EP300; this interaction represses EP300 transcriptional activity. Interacts with protein E2; this interaction inhibits E7 oncogenic activity. Interacts with host TMEM173/STING; this interaction impairs the ability of TMEM173/STING to sense cytosolic DNA and promote the production of type I interferon (IFN-alpha and IFN-beta).</text>
</comment>
<comment type="interaction">
    <interactant intactId="EBI-9690349">
        <id>Q07857</id>
    </interactant>
    <interactant intactId="EBI-81249">
        <id>O15111</id>
        <label>CHUK</label>
    </interactant>
    <organismsDiffer>true</organismsDiffer>
    <experiments>2</experiments>
</comment>
<comment type="subcellular location">
    <subcellularLocation>
        <location evidence="1">Host cytoplasm</location>
    </subcellularLocation>
    <subcellularLocation>
        <location evidence="1">Host nucleus</location>
    </subcellularLocation>
    <text evidence="1">Predominantly found in the host nucleus.</text>
</comment>
<comment type="domain">
    <text evidence="1">The E7 terminal domain is an intrinsically disordered domain, whose flexibility and conformational transitions confer target adaptability to the oncoprotein. It allows adaptation to a variety of protein targets and exposes the PEST degradation sequence that regulates its turnover in the cell.</text>
</comment>
<comment type="PTM">
    <text evidence="1">Highly phosphorylated.</text>
</comment>
<comment type="similarity">
    <text evidence="1">Belongs to the papillomaviridae E7 protein family.</text>
</comment>
<proteinExistence type="evidence at protein level"/>
<name>VE7_HPV04</name>
<dbReference type="EMBL" id="X70827">
    <property type="protein sequence ID" value="CAA50158.1"/>
    <property type="molecule type" value="Genomic_DNA"/>
</dbReference>
<dbReference type="RefSeq" id="NP_040890.1">
    <property type="nucleotide sequence ID" value="NC_001457.1"/>
</dbReference>
<dbReference type="SMR" id="Q07857"/>
<dbReference type="BioGRID" id="3509175">
    <property type="interactions" value="1"/>
</dbReference>
<dbReference type="IntAct" id="Q07857">
    <property type="interactions" value="1"/>
</dbReference>
<dbReference type="KEGG" id="vg:1489452"/>
<dbReference type="OrthoDB" id="28045at10239"/>
<dbReference type="Proteomes" id="UP000009253">
    <property type="component" value="Genome"/>
</dbReference>
<dbReference type="GO" id="GO:0030430">
    <property type="term" value="C:host cell cytoplasm"/>
    <property type="evidence" value="ECO:0007669"/>
    <property type="project" value="UniProtKB-SubCell"/>
</dbReference>
<dbReference type="GO" id="GO:0042025">
    <property type="term" value="C:host cell nucleus"/>
    <property type="evidence" value="ECO:0007669"/>
    <property type="project" value="UniProtKB-SubCell"/>
</dbReference>
<dbReference type="GO" id="GO:0003677">
    <property type="term" value="F:DNA binding"/>
    <property type="evidence" value="ECO:0007669"/>
    <property type="project" value="UniProtKB-UniRule"/>
</dbReference>
<dbReference type="GO" id="GO:0003700">
    <property type="term" value="F:DNA-binding transcription factor activity"/>
    <property type="evidence" value="ECO:0007669"/>
    <property type="project" value="UniProtKB-UniRule"/>
</dbReference>
<dbReference type="GO" id="GO:0019904">
    <property type="term" value="F:protein domain specific binding"/>
    <property type="evidence" value="ECO:0007669"/>
    <property type="project" value="UniProtKB-UniRule"/>
</dbReference>
<dbReference type="GO" id="GO:0008270">
    <property type="term" value="F:zinc ion binding"/>
    <property type="evidence" value="ECO:0007669"/>
    <property type="project" value="UniProtKB-KW"/>
</dbReference>
<dbReference type="GO" id="GO:0006351">
    <property type="term" value="P:DNA-templated transcription"/>
    <property type="evidence" value="ECO:0007669"/>
    <property type="project" value="UniProtKB-UniRule"/>
</dbReference>
<dbReference type="GO" id="GO:0039645">
    <property type="term" value="P:symbiont-mediated perturbation of host cell cycle G1/S transition checkpoint"/>
    <property type="evidence" value="ECO:0007669"/>
    <property type="project" value="UniProtKB-UniRule"/>
</dbReference>
<dbReference type="GO" id="GO:0052170">
    <property type="term" value="P:symbiont-mediated suppression of host innate immune response"/>
    <property type="evidence" value="ECO:0007669"/>
    <property type="project" value="UniProtKB-KW"/>
</dbReference>
<dbReference type="GO" id="GO:0039502">
    <property type="term" value="P:symbiont-mediated suppression of host type I interferon-mediated signaling pathway"/>
    <property type="evidence" value="ECO:0007669"/>
    <property type="project" value="UniProtKB-UniRule"/>
</dbReference>
<dbReference type="Gene3D" id="3.30.160.330">
    <property type="match status" value="1"/>
</dbReference>
<dbReference type="HAMAP" id="MF_04004">
    <property type="entry name" value="PPV_E7"/>
    <property type="match status" value="1"/>
</dbReference>
<dbReference type="InterPro" id="IPR000148">
    <property type="entry name" value="Papilloma_E7"/>
</dbReference>
<dbReference type="Pfam" id="PF00527">
    <property type="entry name" value="E7"/>
    <property type="match status" value="1"/>
</dbReference>
<dbReference type="PIRSF" id="PIRSF003407">
    <property type="entry name" value="Papvi_E7"/>
    <property type="match status" value="1"/>
</dbReference>
<dbReference type="SUPFAM" id="SSF161234">
    <property type="entry name" value="E7 C-terminal domain-like"/>
    <property type="match status" value="1"/>
</dbReference>
<organismHost>
    <name type="scientific">Homo sapiens</name>
    <name type="common">Human</name>
    <dbReference type="NCBI Taxonomy" id="9606"/>
</organismHost>
<protein>
    <recommendedName>
        <fullName evidence="1">Protein E7</fullName>
    </recommendedName>
</protein>
<feature type="chain" id="PRO_0000133401" description="Protein E7">
    <location>
        <begin position="1"/>
        <end position="100"/>
    </location>
</feature>
<feature type="zinc finger region" evidence="1">
    <location>
        <begin position="54"/>
        <end position="91"/>
    </location>
</feature>
<feature type="region of interest" description="E7 terminal domain" evidence="1">
    <location>
        <begin position="1"/>
        <end position="42"/>
    </location>
</feature>
<feature type="short sequence motif" description="Nuclear export signal" evidence="1">
    <location>
        <begin position="72"/>
        <end position="80"/>
    </location>
</feature>
<evidence type="ECO:0000255" key="1">
    <source>
        <dbReference type="HAMAP-Rule" id="MF_04004"/>
    </source>
</evidence>